<dbReference type="EC" id="6.1.1.14" evidence="1"/>
<dbReference type="EMBL" id="CP000792">
    <property type="protein sequence ID" value="EAT98246.1"/>
    <property type="molecule type" value="Genomic_DNA"/>
</dbReference>
<dbReference type="RefSeq" id="WP_012139924.1">
    <property type="nucleotide sequence ID" value="NC_009802.2"/>
</dbReference>
<dbReference type="SMR" id="A7ZDY6"/>
<dbReference type="STRING" id="360104.CCC13826_1439"/>
<dbReference type="KEGG" id="cco:CCC13826_1439"/>
<dbReference type="eggNOG" id="COG0752">
    <property type="taxonomic scope" value="Bacteria"/>
</dbReference>
<dbReference type="HOGENOM" id="CLU_057066_1_0_7"/>
<dbReference type="OrthoDB" id="9802183at2"/>
<dbReference type="Proteomes" id="UP000001121">
    <property type="component" value="Chromosome"/>
</dbReference>
<dbReference type="GO" id="GO:0005829">
    <property type="term" value="C:cytosol"/>
    <property type="evidence" value="ECO:0007669"/>
    <property type="project" value="TreeGrafter"/>
</dbReference>
<dbReference type="GO" id="GO:0005524">
    <property type="term" value="F:ATP binding"/>
    <property type="evidence" value="ECO:0007669"/>
    <property type="project" value="UniProtKB-UniRule"/>
</dbReference>
<dbReference type="GO" id="GO:0004820">
    <property type="term" value="F:glycine-tRNA ligase activity"/>
    <property type="evidence" value="ECO:0007669"/>
    <property type="project" value="UniProtKB-UniRule"/>
</dbReference>
<dbReference type="GO" id="GO:0006426">
    <property type="term" value="P:glycyl-tRNA aminoacylation"/>
    <property type="evidence" value="ECO:0007669"/>
    <property type="project" value="UniProtKB-UniRule"/>
</dbReference>
<dbReference type="CDD" id="cd00733">
    <property type="entry name" value="GlyRS_alpha_core"/>
    <property type="match status" value="1"/>
</dbReference>
<dbReference type="FunFam" id="3.30.930.10:FF:000006">
    <property type="entry name" value="Glycine--tRNA ligase alpha subunit"/>
    <property type="match status" value="1"/>
</dbReference>
<dbReference type="Gene3D" id="3.30.930.10">
    <property type="entry name" value="Bira Bifunctional Protein, Domain 2"/>
    <property type="match status" value="1"/>
</dbReference>
<dbReference type="Gene3D" id="1.20.58.180">
    <property type="entry name" value="Class II aaRS and biotin synthetases, domain 2"/>
    <property type="match status" value="1"/>
</dbReference>
<dbReference type="HAMAP" id="MF_00254">
    <property type="entry name" value="Gly_tRNA_synth_alpha"/>
    <property type="match status" value="1"/>
</dbReference>
<dbReference type="InterPro" id="IPR045864">
    <property type="entry name" value="aa-tRNA-synth_II/BPL/LPL"/>
</dbReference>
<dbReference type="InterPro" id="IPR006194">
    <property type="entry name" value="Gly-tRNA-synth_heterodimer"/>
</dbReference>
<dbReference type="InterPro" id="IPR002310">
    <property type="entry name" value="Gly-tRNA_ligase_asu"/>
</dbReference>
<dbReference type="NCBIfam" id="TIGR00388">
    <property type="entry name" value="glyQ"/>
    <property type="match status" value="1"/>
</dbReference>
<dbReference type="NCBIfam" id="NF006827">
    <property type="entry name" value="PRK09348.1"/>
    <property type="match status" value="1"/>
</dbReference>
<dbReference type="PANTHER" id="PTHR30075:SF2">
    <property type="entry name" value="GLYCINE--TRNA LIGASE, CHLOROPLASTIC_MITOCHONDRIAL 2"/>
    <property type="match status" value="1"/>
</dbReference>
<dbReference type="PANTHER" id="PTHR30075">
    <property type="entry name" value="GLYCYL-TRNA SYNTHETASE"/>
    <property type="match status" value="1"/>
</dbReference>
<dbReference type="Pfam" id="PF02091">
    <property type="entry name" value="tRNA-synt_2e"/>
    <property type="match status" value="1"/>
</dbReference>
<dbReference type="PRINTS" id="PR01044">
    <property type="entry name" value="TRNASYNTHGA"/>
</dbReference>
<dbReference type="SUPFAM" id="SSF55681">
    <property type="entry name" value="Class II aaRS and biotin synthetases"/>
    <property type="match status" value="1"/>
</dbReference>
<dbReference type="PROSITE" id="PS50861">
    <property type="entry name" value="AA_TRNA_LIGASE_II_GLYAB"/>
    <property type="match status" value="1"/>
</dbReference>
<proteinExistence type="inferred from homology"/>
<name>SYGA_CAMC1</name>
<protein>
    <recommendedName>
        <fullName evidence="1">Glycine--tRNA ligase alpha subunit</fullName>
        <ecNumber evidence="1">6.1.1.14</ecNumber>
    </recommendedName>
    <alternativeName>
        <fullName evidence="1">Glycyl-tRNA synthetase alpha subunit</fullName>
        <shortName evidence="1">GlyRS</shortName>
    </alternativeName>
</protein>
<organism>
    <name type="scientific">Campylobacter concisus (strain 13826)</name>
    <dbReference type="NCBI Taxonomy" id="360104"/>
    <lineage>
        <taxon>Bacteria</taxon>
        <taxon>Pseudomonadati</taxon>
        <taxon>Campylobacterota</taxon>
        <taxon>Epsilonproteobacteria</taxon>
        <taxon>Campylobacterales</taxon>
        <taxon>Campylobacteraceae</taxon>
        <taxon>Campylobacter</taxon>
    </lineage>
</organism>
<feature type="chain" id="PRO_1000047404" description="Glycine--tRNA ligase alpha subunit">
    <location>
        <begin position="1"/>
        <end position="286"/>
    </location>
</feature>
<comment type="catalytic activity">
    <reaction evidence="1">
        <text>tRNA(Gly) + glycine + ATP = glycyl-tRNA(Gly) + AMP + diphosphate</text>
        <dbReference type="Rhea" id="RHEA:16013"/>
        <dbReference type="Rhea" id="RHEA-COMP:9664"/>
        <dbReference type="Rhea" id="RHEA-COMP:9683"/>
        <dbReference type="ChEBI" id="CHEBI:30616"/>
        <dbReference type="ChEBI" id="CHEBI:33019"/>
        <dbReference type="ChEBI" id="CHEBI:57305"/>
        <dbReference type="ChEBI" id="CHEBI:78442"/>
        <dbReference type="ChEBI" id="CHEBI:78522"/>
        <dbReference type="ChEBI" id="CHEBI:456215"/>
        <dbReference type="EC" id="6.1.1.14"/>
    </reaction>
</comment>
<comment type="subunit">
    <text evidence="1">Tetramer of two alpha and two beta subunits.</text>
</comment>
<comment type="subcellular location">
    <subcellularLocation>
        <location evidence="1">Cytoplasm</location>
    </subcellularLocation>
</comment>
<comment type="similarity">
    <text evidence="1">Belongs to the class-II aminoacyl-tRNA synthetase family.</text>
</comment>
<evidence type="ECO:0000255" key="1">
    <source>
        <dbReference type="HAMAP-Rule" id="MF_00254"/>
    </source>
</evidence>
<keyword id="KW-0030">Aminoacyl-tRNA synthetase</keyword>
<keyword id="KW-0067">ATP-binding</keyword>
<keyword id="KW-0963">Cytoplasm</keyword>
<keyword id="KW-0436">Ligase</keyword>
<keyword id="KW-0547">Nucleotide-binding</keyword>
<keyword id="KW-0648">Protein biosynthesis</keyword>
<gene>
    <name evidence="1" type="primary">glyQ</name>
    <name type="ordered locus">Ccon26_11360</name>
    <name type="ORF">CCC13826_1439</name>
</gene>
<reference key="1">
    <citation type="submission" date="2007-10" db="EMBL/GenBank/DDBJ databases">
        <title>Genome sequence of Campylobacter concisus 13826 isolated from human feces.</title>
        <authorList>
            <person name="Fouts D.E."/>
            <person name="Mongodin E.F."/>
            <person name="Puiu D."/>
            <person name="Sebastian Y."/>
            <person name="Miller W.G."/>
            <person name="Mandrell R.E."/>
            <person name="On S."/>
            <person name="Nelson K.E."/>
        </authorList>
    </citation>
    <scope>NUCLEOTIDE SEQUENCE [LARGE SCALE GENOMIC DNA]</scope>
    <source>
        <strain>13826</strain>
    </source>
</reference>
<sequence>MTFSQIILTLQNYWQEQGCVILQPYDMPAGAGTYHQATFLRSLGPKPWATAYVAPSRRPTDGRYGENPNRLGAYYQFQVLIKPSPENIQELYLKSLERLGLNLKNHDIRFVEDNWESPTLGAWGLGWEVWLDGMEVTQFTYFQQVGGIACELISGEITYGLERLAMYLQDVNSVYDIVWDDSNGSIVTYADVHKQGEYEWSKYNFEVANVDMLFNQFENAFNECKRCLEAKISLPAYDYCMLAAHTFNVLDARGAISVTQRQDYILKIRELAKECALTYKESLEQK</sequence>
<accession>A7ZDY6</accession>